<reference key="1">
    <citation type="journal article" date="1985" name="Proc. Natl. Acad. Sci. U.S.A.">
        <title>Identification of proliferin mRNA and protein in mouse placenta.</title>
        <authorList>
            <person name="Linzer D.I.H."/>
            <person name="Lee S.-J."/>
            <person name="Ogren L."/>
            <person name="Talamantes F."/>
            <person name="Nathans D."/>
        </authorList>
    </citation>
    <scope>NUCLEOTIDE SEQUENCE [MRNA]</scope>
    <scope>TISSUE SPECIFICITY</scope>
    <scope>GLYCOSYLATION</scope>
    <source>
        <strain>BALB/cJ</strain>
        <tissue>Placenta</tissue>
    </source>
</reference>
<reference key="2">
    <citation type="journal article" date="1989" name="Biochim. Biophys. Acta">
        <title>Characterization of a mouse mitogen-regulated protein/proliferin gene and its promoter: a member of the growth hormone/prolactin gene superfamily.</title>
        <authorList>
            <person name="Connor A.M."/>
            <person name="Waterhouse P."/>
            <person name="Khokha R."/>
            <person name="Denhardt D.T."/>
        </authorList>
    </citation>
    <scope>NUCLEOTIDE SEQUENCE [GENOMIC DNA]</scope>
    <source>
        <strain>CD-1</strain>
        <tissue>Embryonic fibroblast</tissue>
    </source>
</reference>
<reference key="3">
    <citation type="journal article" date="2005" name="Science">
        <title>The transcriptional landscape of the mammalian genome.</title>
        <authorList>
            <person name="Carninci P."/>
            <person name="Kasukawa T."/>
            <person name="Katayama S."/>
            <person name="Gough J."/>
            <person name="Frith M.C."/>
            <person name="Maeda N."/>
            <person name="Oyama R."/>
            <person name="Ravasi T."/>
            <person name="Lenhard B."/>
            <person name="Wells C."/>
            <person name="Kodzius R."/>
            <person name="Shimokawa K."/>
            <person name="Bajic V.B."/>
            <person name="Brenner S.E."/>
            <person name="Batalov S."/>
            <person name="Forrest A.R."/>
            <person name="Zavolan M."/>
            <person name="Davis M.J."/>
            <person name="Wilming L.G."/>
            <person name="Aidinis V."/>
            <person name="Allen J.E."/>
            <person name="Ambesi-Impiombato A."/>
            <person name="Apweiler R."/>
            <person name="Aturaliya R.N."/>
            <person name="Bailey T.L."/>
            <person name="Bansal M."/>
            <person name="Baxter L."/>
            <person name="Beisel K.W."/>
            <person name="Bersano T."/>
            <person name="Bono H."/>
            <person name="Chalk A.M."/>
            <person name="Chiu K.P."/>
            <person name="Choudhary V."/>
            <person name="Christoffels A."/>
            <person name="Clutterbuck D.R."/>
            <person name="Crowe M.L."/>
            <person name="Dalla E."/>
            <person name="Dalrymple B.P."/>
            <person name="de Bono B."/>
            <person name="Della Gatta G."/>
            <person name="di Bernardo D."/>
            <person name="Down T."/>
            <person name="Engstrom P."/>
            <person name="Fagiolini M."/>
            <person name="Faulkner G."/>
            <person name="Fletcher C.F."/>
            <person name="Fukushima T."/>
            <person name="Furuno M."/>
            <person name="Futaki S."/>
            <person name="Gariboldi M."/>
            <person name="Georgii-Hemming P."/>
            <person name="Gingeras T.R."/>
            <person name="Gojobori T."/>
            <person name="Green R.E."/>
            <person name="Gustincich S."/>
            <person name="Harbers M."/>
            <person name="Hayashi Y."/>
            <person name="Hensch T.K."/>
            <person name="Hirokawa N."/>
            <person name="Hill D."/>
            <person name="Huminiecki L."/>
            <person name="Iacono M."/>
            <person name="Ikeo K."/>
            <person name="Iwama A."/>
            <person name="Ishikawa T."/>
            <person name="Jakt M."/>
            <person name="Kanapin A."/>
            <person name="Katoh M."/>
            <person name="Kawasawa Y."/>
            <person name="Kelso J."/>
            <person name="Kitamura H."/>
            <person name="Kitano H."/>
            <person name="Kollias G."/>
            <person name="Krishnan S.P."/>
            <person name="Kruger A."/>
            <person name="Kummerfeld S.K."/>
            <person name="Kurochkin I.V."/>
            <person name="Lareau L.F."/>
            <person name="Lazarevic D."/>
            <person name="Lipovich L."/>
            <person name="Liu J."/>
            <person name="Liuni S."/>
            <person name="McWilliam S."/>
            <person name="Madan Babu M."/>
            <person name="Madera M."/>
            <person name="Marchionni L."/>
            <person name="Matsuda H."/>
            <person name="Matsuzawa S."/>
            <person name="Miki H."/>
            <person name="Mignone F."/>
            <person name="Miyake S."/>
            <person name="Morris K."/>
            <person name="Mottagui-Tabar S."/>
            <person name="Mulder N."/>
            <person name="Nakano N."/>
            <person name="Nakauchi H."/>
            <person name="Ng P."/>
            <person name="Nilsson R."/>
            <person name="Nishiguchi S."/>
            <person name="Nishikawa S."/>
            <person name="Nori F."/>
            <person name="Ohara O."/>
            <person name="Okazaki Y."/>
            <person name="Orlando V."/>
            <person name="Pang K.C."/>
            <person name="Pavan W.J."/>
            <person name="Pavesi G."/>
            <person name="Pesole G."/>
            <person name="Petrovsky N."/>
            <person name="Piazza S."/>
            <person name="Reed J."/>
            <person name="Reid J.F."/>
            <person name="Ring B.Z."/>
            <person name="Ringwald M."/>
            <person name="Rost B."/>
            <person name="Ruan Y."/>
            <person name="Salzberg S.L."/>
            <person name="Sandelin A."/>
            <person name="Schneider C."/>
            <person name="Schoenbach C."/>
            <person name="Sekiguchi K."/>
            <person name="Semple C.A."/>
            <person name="Seno S."/>
            <person name="Sessa L."/>
            <person name="Sheng Y."/>
            <person name="Shibata Y."/>
            <person name="Shimada H."/>
            <person name="Shimada K."/>
            <person name="Silva D."/>
            <person name="Sinclair B."/>
            <person name="Sperling S."/>
            <person name="Stupka E."/>
            <person name="Sugiura K."/>
            <person name="Sultana R."/>
            <person name="Takenaka Y."/>
            <person name="Taki K."/>
            <person name="Tammoja K."/>
            <person name="Tan S.L."/>
            <person name="Tang S."/>
            <person name="Taylor M.S."/>
            <person name="Tegner J."/>
            <person name="Teichmann S.A."/>
            <person name="Ueda H.R."/>
            <person name="van Nimwegen E."/>
            <person name="Verardo R."/>
            <person name="Wei C.L."/>
            <person name="Yagi K."/>
            <person name="Yamanishi H."/>
            <person name="Zabarovsky E."/>
            <person name="Zhu S."/>
            <person name="Zimmer A."/>
            <person name="Hide W."/>
            <person name="Bult C."/>
            <person name="Grimmond S.M."/>
            <person name="Teasdale R.D."/>
            <person name="Liu E.T."/>
            <person name="Brusic V."/>
            <person name="Quackenbush J."/>
            <person name="Wahlestedt C."/>
            <person name="Mattick J.S."/>
            <person name="Hume D.A."/>
            <person name="Kai C."/>
            <person name="Sasaki D."/>
            <person name="Tomaru Y."/>
            <person name="Fukuda S."/>
            <person name="Kanamori-Katayama M."/>
            <person name="Suzuki M."/>
            <person name="Aoki J."/>
            <person name="Arakawa T."/>
            <person name="Iida J."/>
            <person name="Imamura K."/>
            <person name="Itoh M."/>
            <person name="Kato T."/>
            <person name="Kawaji H."/>
            <person name="Kawagashira N."/>
            <person name="Kawashima T."/>
            <person name="Kojima M."/>
            <person name="Kondo S."/>
            <person name="Konno H."/>
            <person name="Nakano K."/>
            <person name="Ninomiya N."/>
            <person name="Nishio T."/>
            <person name="Okada M."/>
            <person name="Plessy C."/>
            <person name="Shibata K."/>
            <person name="Shiraki T."/>
            <person name="Suzuki S."/>
            <person name="Tagami M."/>
            <person name="Waki K."/>
            <person name="Watahiki A."/>
            <person name="Okamura-Oho Y."/>
            <person name="Suzuki H."/>
            <person name="Kawai J."/>
            <person name="Hayashizaki Y."/>
        </authorList>
    </citation>
    <scope>NUCLEOTIDE SEQUENCE [LARGE SCALE MRNA]</scope>
    <source>
        <strain>C57BL/6J</strain>
        <tissue>Embryo</tissue>
        <tissue>Placenta</tissue>
    </source>
</reference>
<reference key="4">
    <citation type="journal article" date="2004" name="Genome Res.">
        <title>The status, quality, and expansion of the NIH full-length cDNA project: the Mammalian Gene Collection (MGC).</title>
        <authorList>
            <consortium name="The MGC Project Team"/>
        </authorList>
    </citation>
    <scope>NUCLEOTIDE SEQUENCE [LARGE SCALE MRNA]</scope>
    <source>
        <strain>C57BL/6J</strain>
        <tissue>Egg</tissue>
        <tissue>Embryo</tissue>
    </source>
</reference>
<reference key="5">
    <citation type="journal article" date="1994" name="Mamm. Genome">
        <title>Genetic mapping of 40 cDNA clones on the mouse genome by PCR.</title>
        <authorList>
            <person name="Ko M.S."/>
            <person name="Wang X."/>
            <person name="Horton J.H."/>
            <person name="Hagen M.D."/>
            <person name="Takahashi N."/>
            <person name="Maezaki Y."/>
            <person name="Nadeau J.H."/>
        </authorList>
    </citation>
    <scope>NUCLEOTIDE SEQUENCE [GENOMIC DNA] OF 208-224</scope>
    <source>
        <strain>C57BL/6J</strain>
    </source>
</reference>
<reference key="6">
    <citation type="journal article" date="1999" name="Endocrinology">
        <title>Signaling between the placenta and the uterus involving the mitogen-regulated protein/proliferins.</title>
        <authorList>
            <person name="Fang Y."/>
            <person name="Lepont P."/>
            <person name="Fassett J.T."/>
            <person name="Ford S.P."/>
            <person name="Mubaidin A."/>
            <person name="Hamilton R.T."/>
            <person name="Nilsen-Hamilton M."/>
        </authorList>
    </citation>
    <scope>SUBCELLULAR LOCATION</scope>
    <scope>TISSUE SPECIFICITY</scope>
    <scope>DEVELOPMENTAL STAGE</scope>
    <scope>GLYCOSYLATION</scope>
</reference>
<reference key="7">
    <citation type="journal article" date="2001" name="Endocrinology">
        <title>Mrp3, a mitogen-regulated protein/proliferin gene expressed in wound healing and in hair follicles.</title>
        <authorList>
            <person name="Fassett J.T."/>
            <person name="Nilsen-Hamilton M."/>
        </authorList>
    </citation>
    <scope>FUNCTION</scope>
    <scope>TISSUE SPECIFICITY</scope>
    <scope>DEVELOPMENTAL STAGE</scope>
</reference>
<reference key="8">
    <citation type="journal article" date="2006" name="Neurosci. Res.">
        <title>Proliferin enhances microvilli formation and cell growth of neuroblastoma cells.</title>
        <authorList>
            <person name="Wang J.W."/>
            <person name="Jiang Y.N."/>
            <person name="Huang C.Y."/>
            <person name="Huang P.Y."/>
            <person name="Huang M.C."/>
            <person name="Cheng W.T."/>
            <person name="Shen C.K."/>
            <person name="Ju Y.T."/>
        </authorList>
    </citation>
    <scope>FUNCTION</scope>
    <scope>SUBCELLULAR LOCATION</scope>
    <scope>TISSUE SPECIFICITY</scope>
    <scope>DEVELOPMENTAL STAGE</scope>
</reference>
<keyword id="KW-1015">Disulfide bond</keyword>
<keyword id="KW-0256">Endoplasmic reticulum</keyword>
<keyword id="KW-0325">Glycoprotein</keyword>
<keyword id="KW-0372">Hormone</keyword>
<keyword id="KW-1185">Reference proteome</keyword>
<keyword id="KW-0964">Secreted</keyword>
<keyword id="KW-0732">Signal</keyword>
<protein>
    <recommendedName>
        <fullName>Prolactin-2C3</fullName>
    </recommendedName>
    <alternativeName>
        <fullName>Mitogen-regulated protein 2</fullName>
    </alternativeName>
    <alternativeName>
        <fullName>Mitogen-regulated protein 3</fullName>
    </alternativeName>
    <alternativeName>
        <fullName>Prolactin-2C4</fullName>
    </alternativeName>
    <alternativeName>
        <fullName>Proliferin-2</fullName>
    </alternativeName>
    <alternativeName>
        <fullName>Proliferin-3</fullName>
    </alternativeName>
</protein>
<gene>
    <name type="primary">Prl2c3</name>
    <name type="synonym">Mrp2</name>
    <name type="synonym">Mrp3</name>
    <name type="synonym">Mrpplf3</name>
    <name type="synonym">Plf2</name>
    <name type="synonym">Plf3</name>
    <name type="synonym">Prl2c4</name>
</gene>
<proteinExistence type="evidence at protein level"/>
<name>PR2C3_MOUSE</name>
<sequence length="224" mass="25338">MLPSSIQPCSWILLLLLVNSSLLWKNVASFPMCAMRNGRCFMSFEDTFELAGSLSHNISIEVSELFNEFEKHYSNVSGLRDKSPMRCNTSFLPTPENKEQARLTHYAALLKSGAMILDAWESPLDDLVSELSTIKNVPDIIISKATDIKKKINAVRNGVNALMSTMLQNGDEEKKNPAWFLQSDNEDARIHSLYGMISCLDNDFKKVDIYLNVLKCYMLKIDNC</sequence>
<feature type="signal peptide" evidence="2">
    <location>
        <begin position="1"/>
        <end position="29"/>
    </location>
</feature>
<feature type="chain" id="PRO_0000032968" description="Prolactin-2C3">
    <location>
        <begin position="30"/>
        <end position="224"/>
    </location>
</feature>
<feature type="glycosylation site" description="N-linked (GlcNAc...) asparagine" evidence="2">
    <location>
        <position position="19"/>
    </location>
</feature>
<feature type="glycosylation site" description="N-linked (GlcNAc...) asparagine" evidence="2">
    <location>
        <position position="57"/>
    </location>
</feature>
<feature type="glycosylation site" description="N-linked (GlcNAc...) asparagine" evidence="2">
    <location>
        <position position="75"/>
    </location>
</feature>
<feature type="glycosylation site" description="N-linked (GlcNAc...) asparagine" evidence="2">
    <location>
        <position position="88"/>
    </location>
</feature>
<feature type="disulfide bond" evidence="1">
    <location>
        <begin position="33"/>
        <end position="40"/>
    </location>
</feature>
<feature type="disulfide bond" evidence="1">
    <location>
        <begin position="87"/>
        <end position="199"/>
    </location>
</feature>
<feature type="disulfide bond" evidence="1">
    <location>
        <begin position="216"/>
        <end position="224"/>
    </location>
</feature>
<feature type="sequence conflict" description="In Ref. 4; AAH58816." evidence="7" ref="4">
    <original>D</original>
    <variation>G</variation>
    <location>
        <position position="81"/>
    </location>
</feature>
<feature type="sequence conflict" description="In Ref. 1; AAA39945." evidence="7" ref="1">
    <original>L</original>
    <variation>S</variation>
    <location>
        <position position="117"/>
    </location>
</feature>
<feature type="sequence conflict" description="In Ref. 4; AAH58816." evidence="7" ref="4">
    <original>D</original>
    <variation>N</variation>
    <location>
        <position position="222"/>
    </location>
</feature>
<comment type="function">
    <text evidence="4 5">May have a role in embryonic development. It is likely to provide a growth stimulus to target cells in maternal and fetal tissues during the development of the embryo at mid-gestation. May play a role during wound healing and in the hair follicle cycle as a growth factor and/or an angiogenesis factor. May play a role in microvilli formation and cell proliferation of neuroblastoma cells.</text>
</comment>
<comment type="subcellular location">
    <subcellularLocation>
        <location evidence="3 5">Secreted</location>
    </subcellularLocation>
    <subcellularLocation>
        <location evidence="5">Endoplasmic reticulum</location>
    </subcellularLocation>
</comment>
<comment type="tissue specificity">
    <text evidence="3 4 5 6">Expressed in placenta and hair follicles, with highest expression levels detected in the outer root sheath and no expression detected in bulb (PubMed:11316781). Expressed in placenta, skin wounds, keratinocytes and weakly in embryonic fibroblasts (PubMed:10537154, PubMed:11316781, PubMed:16876275). Expressed in brain, cerebellum and in Neuro-2a cell line (PubMed:16876275). Not detected in liver, kidney, ovary, pituitary gland and brain (PubMed:3859868).</text>
</comment>
<comment type="developmental stage">
    <text evidence="3 4 5">Expressed during hair follicle morphogenesis, with highest expression levels detected at late anagen stage of the hair follicle cycle (PubMed:11316781). Expressed in developing brain from embryo to adult (PubMed:16876275). In placenta, detected at 8 dpc, peaks at 10 dpc and declines thereafter (PubMed:10537154).</text>
</comment>
<comment type="PTM">
    <text evidence="3">N-glycosylated and sialylated.</text>
</comment>
<comment type="similarity">
    <text evidence="7">Belongs to the somatotropin/prolactin family.</text>
</comment>
<comment type="caution">
    <text evidence="7">Prl2c3 and Prl2c4 have previously been regarded as different proteins, but they seem to be products of the same gene.</text>
</comment>
<evidence type="ECO:0000250" key="1"/>
<evidence type="ECO:0000255" key="2"/>
<evidence type="ECO:0000269" key="3">
    <source>
    </source>
</evidence>
<evidence type="ECO:0000269" key="4">
    <source>
    </source>
</evidence>
<evidence type="ECO:0000269" key="5">
    <source>
    </source>
</evidence>
<evidence type="ECO:0000269" key="6">
    <source>
    </source>
</evidence>
<evidence type="ECO:0000305" key="7"/>
<dbReference type="EMBL" id="K03235">
    <property type="protein sequence ID" value="AAA39945.1"/>
    <property type="molecule type" value="mRNA"/>
</dbReference>
<dbReference type="EMBL" id="X16009">
    <property type="protein sequence ID" value="CAA34146.1"/>
    <property type="molecule type" value="Genomic_DNA"/>
</dbReference>
<dbReference type="EMBL" id="X16010">
    <property type="protein sequence ID" value="CAA34146.1"/>
    <property type="status" value="JOINED"/>
    <property type="molecule type" value="Genomic_DNA"/>
</dbReference>
<dbReference type="EMBL" id="X16011">
    <property type="protein sequence ID" value="CAA34146.1"/>
    <property type="status" value="JOINED"/>
    <property type="molecule type" value="Genomic_DNA"/>
</dbReference>
<dbReference type="EMBL" id="X16012">
    <property type="protein sequence ID" value="CAA34146.1"/>
    <property type="status" value="JOINED"/>
    <property type="molecule type" value="Genomic_DNA"/>
</dbReference>
<dbReference type="EMBL" id="X16013">
    <property type="protein sequence ID" value="CAA34146.1"/>
    <property type="status" value="JOINED"/>
    <property type="molecule type" value="Genomic_DNA"/>
</dbReference>
<dbReference type="EMBL" id="AK145995">
    <property type="protein sequence ID" value="BAE26816.1"/>
    <property type="molecule type" value="mRNA"/>
</dbReference>
<dbReference type="EMBL" id="AK164068">
    <property type="protein sequence ID" value="BAE37612.1"/>
    <property type="molecule type" value="mRNA"/>
</dbReference>
<dbReference type="EMBL" id="BC058816">
    <property type="protein sequence ID" value="AAH58816.1"/>
    <property type="molecule type" value="mRNA"/>
</dbReference>
<dbReference type="EMBL" id="BC064772">
    <property type="protein sequence ID" value="AAH64772.1"/>
    <property type="molecule type" value="mRNA"/>
</dbReference>
<dbReference type="EMBL" id="BC100299">
    <property type="protein sequence ID" value="AAI00300.1"/>
    <property type="molecule type" value="mRNA"/>
</dbReference>
<dbReference type="EMBL" id="BC132078">
    <property type="protein sequence ID" value="AAI32079.1"/>
    <property type="molecule type" value="mRNA"/>
</dbReference>
<dbReference type="EMBL" id="BC132080">
    <property type="protein sequence ID" value="AAI32081.1"/>
    <property type="molecule type" value="mRNA"/>
</dbReference>
<dbReference type="EMBL" id="U05747">
    <property type="protein sequence ID" value="AAB60482.1"/>
    <property type="molecule type" value="Genomic_DNA"/>
</dbReference>
<dbReference type="CCDS" id="CCDS36595.1"/>
<dbReference type="PIR" id="A23159">
    <property type="entry name" value="A23159"/>
</dbReference>
<dbReference type="PIR" id="S05648">
    <property type="entry name" value="S05648"/>
</dbReference>
<dbReference type="RefSeq" id="NP_035248.2">
    <property type="nucleotide sequence ID" value="NM_011118.2"/>
</dbReference>
<dbReference type="RefSeq" id="NP_036084.2">
    <property type="nucleotide sequence ID" value="NM_011954.2"/>
</dbReference>
<dbReference type="SMR" id="P04768"/>
<dbReference type="FunCoup" id="P04768">
    <property type="interactions" value="26"/>
</dbReference>
<dbReference type="STRING" id="10090.ENSMUSP00000097393"/>
<dbReference type="GlyCosmos" id="P04768">
    <property type="glycosylation" value="4 sites, No reported glycans"/>
</dbReference>
<dbReference type="GlyGen" id="P04768">
    <property type="glycosylation" value="4 sites"/>
</dbReference>
<dbReference type="PaxDb" id="10090-ENSMUSP00000097393"/>
<dbReference type="ProteomicsDB" id="291808"/>
<dbReference type="Pumba" id="P04768"/>
<dbReference type="DNASU" id="18812"/>
<dbReference type="DNASU" id="26421"/>
<dbReference type="Ensembl" id="ENSMUST00000099805.3">
    <property type="protein sequence ID" value="ENSMUSP00000097393.2"/>
    <property type="gene ID" value="ENSMUSG00000056457.7"/>
</dbReference>
<dbReference type="GeneID" id="18812"/>
<dbReference type="GeneID" id="26421"/>
<dbReference type="KEGG" id="mmu:18812"/>
<dbReference type="KEGG" id="mmu:26421"/>
<dbReference type="UCSC" id="uc007plw.3">
    <property type="organism name" value="mouse"/>
</dbReference>
<dbReference type="AGR" id="MGI:1341833"/>
<dbReference type="CTD" id="18812"/>
<dbReference type="CTD" id="26421"/>
<dbReference type="MGI" id="MGI:1341833">
    <property type="gene designation" value="Prl2c3"/>
</dbReference>
<dbReference type="VEuPathDB" id="HostDB:ENSMUSG00000056457"/>
<dbReference type="eggNOG" id="ENOG502QYU3">
    <property type="taxonomic scope" value="Eukaryota"/>
</dbReference>
<dbReference type="GeneTree" id="ENSGT00950000182818"/>
<dbReference type="HOGENOM" id="CLU_088274_0_0_1"/>
<dbReference type="InParanoid" id="P04768"/>
<dbReference type="OMA" id="CHLRLNC"/>
<dbReference type="OrthoDB" id="9584148at2759"/>
<dbReference type="PhylomeDB" id="P04768"/>
<dbReference type="TreeFam" id="TF332592"/>
<dbReference type="BioGRID-ORCS" id="18812">
    <property type="hits" value="9 hits in 45 CRISPR screens"/>
</dbReference>
<dbReference type="BioGRID-ORCS" id="26421">
    <property type="hits" value="5 hits in 16 CRISPR screens"/>
</dbReference>
<dbReference type="ChiTaRS" id="Prl2c3">
    <property type="organism name" value="mouse"/>
</dbReference>
<dbReference type="PRO" id="PR:P04768"/>
<dbReference type="Proteomes" id="UP000000589">
    <property type="component" value="Chromosome 13"/>
</dbReference>
<dbReference type="RNAct" id="P04768">
    <property type="molecule type" value="protein"/>
</dbReference>
<dbReference type="Bgee" id="ENSMUSG00000056457">
    <property type="expression patterns" value="Expressed in placenta and 32 other cell types or tissues"/>
</dbReference>
<dbReference type="ExpressionAtlas" id="P04768">
    <property type="expression patterns" value="baseline and differential"/>
</dbReference>
<dbReference type="GO" id="GO:0005783">
    <property type="term" value="C:endoplasmic reticulum"/>
    <property type="evidence" value="ECO:0007669"/>
    <property type="project" value="UniProtKB-SubCell"/>
</dbReference>
<dbReference type="GO" id="GO:0005615">
    <property type="term" value="C:extracellular space"/>
    <property type="evidence" value="ECO:0000314"/>
    <property type="project" value="MGI"/>
</dbReference>
<dbReference type="GO" id="GO:0008083">
    <property type="term" value="F:growth factor activity"/>
    <property type="evidence" value="ECO:0000314"/>
    <property type="project" value="MGI"/>
</dbReference>
<dbReference type="GO" id="GO:0005179">
    <property type="term" value="F:hormone activity"/>
    <property type="evidence" value="ECO:0000314"/>
    <property type="project" value="MGI"/>
</dbReference>
<dbReference type="GO" id="GO:0071425">
    <property type="term" value="P:hematopoietic stem cell proliferation"/>
    <property type="evidence" value="ECO:0000314"/>
    <property type="project" value="MGI"/>
</dbReference>
<dbReference type="GO" id="GO:1902035">
    <property type="term" value="P:positive regulation of hematopoietic stem cell proliferation"/>
    <property type="evidence" value="ECO:0000314"/>
    <property type="project" value="MGI"/>
</dbReference>
<dbReference type="CDD" id="cd10288">
    <property type="entry name" value="prolactin_like"/>
    <property type="match status" value="1"/>
</dbReference>
<dbReference type="FunFam" id="1.20.1250.10:FF:000047">
    <property type="entry name" value="Growth hormone d21"/>
    <property type="match status" value="1"/>
</dbReference>
<dbReference type="Gene3D" id="1.20.1250.10">
    <property type="match status" value="1"/>
</dbReference>
<dbReference type="InterPro" id="IPR009079">
    <property type="entry name" value="4_helix_cytokine-like_core"/>
</dbReference>
<dbReference type="InterPro" id="IPR001400">
    <property type="entry name" value="Somatotropin/Prolactin"/>
</dbReference>
<dbReference type="InterPro" id="IPR018116">
    <property type="entry name" value="Somatotropin_CS"/>
</dbReference>
<dbReference type="PANTHER" id="PTHR11417:SF39">
    <property type="entry name" value="GROWTH HORMONE D22-RELATED"/>
    <property type="match status" value="1"/>
</dbReference>
<dbReference type="PANTHER" id="PTHR11417">
    <property type="entry name" value="SOMATOTROPIN,PROLACTIN"/>
    <property type="match status" value="1"/>
</dbReference>
<dbReference type="Pfam" id="PF00103">
    <property type="entry name" value="Hormone_1"/>
    <property type="match status" value="1"/>
</dbReference>
<dbReference type="PRINTS" id="PR00836">
    <property type="entry name" value="SOMATOTROPIN"/>
</dbReference>
<dbReference type="SUPFAM" id="SSF47266">
    <property type="entry name" value="4-helical cytokines"/>
    <property type="match status" value="1"/>
</dbReference>
<dbReference type="PROSITE" id="PS00266">
    <property type="entry name" value="SOMATOTROPIN_1"/>
    <property type="match status" value="1"/>
</dbReference>
<dbReference type="PROSITE" id="PS00338">
    <property type="entry name" value="SOMATOTROPIN_2"/>
    <property type="match status" value="1"/>
</dbReference>
<accession>P04768</accession>
<accession>P18918</accession>
<accession>Q498A5</accession>
<accession>Q6PDB6</accession>
<organism>
    <name type="scientific">Mus musculus</name>
    <name type="common">Mouse</name>
    <dbReference type="NCBI Taxonomy" id="10090"/>
    <lineage>
        <taxon>Eukaryota</taxon>
        <taxon>Metazoa</taxon>
        <taxon>Chordata</taxon>
        <taxon>Craniata</taxon>
        <taxon>Vertebrata</taxon>
        <taxon>Euteleostomi</taxon>
        <taxon>Mammalia</taxon>
        <taxon>Eutheria</taxon>
        <taxon>Euarchontoglires</taxon>
        <taxon>Glires</taxon>
        <taxon>Rodentia</taxon>
        <taxon>Myomorpha</taxon>
        <taxon>Muroidea</taxon>
        <taxon>Muridae</taxon>
        <taxon>Murinae</taxon>
        <taxon>Mus</taxon>
        <taxon>Mus</taxon>
    </lineage>
</organism>